<feature type="chain" id="PRO_0000346183" description="D-ribose pyranase">
    <location>
        <begin position="1"/>
        <end position="139"/>
    </location>
</feature>
<feature type="active site" description="Proton donor" evidence="1">
    <location>
        <position position="20"/>
    </location>
</feature>
<feature type="binding site" evidence="1">
    <location>
        <position position="28"/>
    </location>
    <ligand>
        <name>substrate</name>
    </ligand>
</feature>
<feature type="binding site" evidence="1">
    <location>
        <position position="106"/>
    </location>
    <ligand>
        <name>substrate</name>
    </ligand>
</feature>
<feature type="binding site" evidence="1">
    <location>
        <begin position="128"/>
        <end position="130"/>
    </location>
    <ligand>
        <name>substrate</name>
    </ligand>
</feature>
<evidence type="ECO:0000255" key="1">
    <source>
        <dbReference type="HAMAP-Rule" id="MF_01661"/>
    </source>
</evidence>
<name>RBSD_CITK8</name>
<protein>
    <recommendedName>
        <fullName evidence="1">D-ribose pyranase</fullName>
        <ecNumber evidence="1">5.4.99.62</ecNumber>
    </recommendedName>
</protein>
<gene>
    <name evidence="1" type="primary">rbsD</name>
    <name type="ordered locus">CKO_00088</name>
</gene>
<accession>A8ACQ4</accession>
<dbReference type="EC" id="5.4.99.62" evidence="1"/>
<dbReference type="EMBL" id="CP000822">
    <property type="protein sequence ID" value="ABV11267.1"/>
    <property type="molecule type" value="Genomic_DNA"/>
</dbReference>
<dbReference type="RefSeq" id="WP_024130088.1">
    <property type="nucleotide sequence ID" value="NC_009792.1"/>
</dbReference>
<dbReference type="SMR" id="A8ACQ4"/>
<dbReference type="STRING" id="290338.CKO_00088"/>
<dbReference type="GeneID" id="45134389"/>
<dbReference type="KEGG" id="cko:CKO_00088"/>
<dbReference type="HOGENOM" id="CLU_135498_1_0_6"/>
<dbReference type="OrthoDB" id="9805009at2"/>
<dbReference type="UniPathway" id="UPA00916">
    <property type="reaction ID" value="UER00888"/>
</dbReference>
<dbReference type="Proteomes" id="UP000008148">
    <property type="component" value="Chromosome"/>
</dbReference>
<dbReference type="GO" id="GO:0005829">
    <property type="term" value="C:cytosol"/>
    <property type="evidence" value="ECO:0007669"/>
    <property type="project" value="TreeGrafter"/>
</dbReference>
<dbReference type="GO" id="GO:0062193">
    <property type="term" value="F:D-ribose pyranase activity"/>
    <property type="evidence" value="ECO:0007669"/>
    <property type="project" value="UniProtKB-EC"/>
</dbReference>
<dbReference type="GO" id="GO:0016872">
    <property type="term" value="F:intramolecular lyase activity"/>
    <property type="evidence" value="ECO:0007669"/>
    <property type="project" value="UniProtKB-UniRule"/>
</dbReference>
<dbReference type="GO" id="GO:0048029">
    <property type="term" value="F:monosaccharide binding"/>
    <property type="evidence" value="ECO:0007669"/>
    <property type="project" value="InterPro"/>
</dbReference>
<dbReference type="GO" id="GO:0019303">
    <property type="term" value="P:D-ribose catabolic process"/>
    <property type="evidence" value="ECO:0007669"/>
    <property type="project" value="UniProtKB-UniRule"/>
</dbReference>
<dbReference type="FunFam" id="3.40.1650.10:FF:000002">
    <property type="entry name" value="D-ribose pyranase"/>
    <property type="match status" value="1"/>
</dbReference>
<dbReference type="Gene3D" id="3.40.1650.10">
    <property type="entry name" value="RbsD-like domain"/>
    <property type="match status" value="1"/>
</dbReference>
<dbReference type="HAMAP" id="MF_01661">
    <property type="entry name" value="D_rib_pyranase"/>
    <property type="match status" value="1"/>
</dbReference>
<dbReference type="InterPro" id="IPR023064">
    <property type="entry name" value="D-ribose_pyranase"/>
</dbReference>
<dbReference type="InterPro" id="IPR023750">
    <property type="entry name" value="RbsD-like_sf"/>
</dbReference>
<dbReference type="InterPro" id="IPR007721">
    <property type="entry name" value="RbsD_FucU"/>
</dbReference>
<dbReference type="NCBIfam" id="NF008761">
    <property type="entry name" value="PRK11797.1"/>
    <property type="match status" value="1"/>
</dbReference>
<dbReference type="PANTHER" id="PTHR37831">
    <property type="entry name" value="D-RIBOSE PYRANASE"/>
    <property type="match status" value="1"/>
</dbReference>
<dbReference type="PANTHER" id="PTHR37831:SF1">
    <property type="entry name" value="D-RIBOSE PYRANASE"/>
    <property type="match status" value="1"/>
</dbReference>
<dbReference type="Pfam" id="PF05025">
    <property type="entry name" value="RbsD_FucU"/>
    <property type="match status" value="1"/>
</dbReference>
<dbReference type="SUPFAM" id="SSF102546">
    <property type="entry name" value="RbsD-like"/>
    <property type="match status" value="1"/>
</dbReference>
<comment type="function">
    <text evidence="1">Catalyzes the interconversion of beta-pyran and beta-furan forms of D-ribose.</text>
</comment>
<comment type="catalytic activity">
    <reaction evidence="1">
        <text>beta-D-ribopyranose = beta-D-ribofuranose</text>
        <dbReference type="Rhea" id="RHEA:25432"/>
        <dbReference type="ChEBI" id="CHEBI:27476"/>
        <dbReference type="ChEBI" id="CHEBI:47002"/>
        <dbReference type="EC" id="5.4.99.62"/>
    </reaction>
</comment>
<comment type="pathway">
    <text evidence="1">Carbohydrate metabolism; D-ribose degradation; D-ribose 5-phosphate from beta-D-ribopyranose: step 1/2.</text>
</comment>
<comment type="subunit">
    <text evidence="1">Homodecamer.</text>
</comment>
<comment type="subcellular location">
    <subcellularLocation>
        <location evidence="1">Cytoplasm</location>
    </subcellularLocation>
</comment>
<comment type="similarity">
    <text evidence="1">Belongs to the RbsD / FucU family. RbsD subfamily.</text>
</comment>
<sequence length="139" mass="15223">MKKGAVLNSDISSVISRLGHTDTLVVCDAGLPVPSSTTRIDMALTQGVPSFMQVLDVVTREMQVEAAILATEIKEHNPQLHETLLSHIEQLQQHQGNTIEIRYTTHEHFKKLTADSQAVIRSGECSPYANVILCAGVTF</sequence>
<keyword id="KW-0119">Carbohydrate metabolism</keyword>
<keyword id="KW-0963">Cytoplasm</keyword>
<keyword id="KW-0413">Isomerase</keyword>
<keyword id="KW-1185">Reference proteome</keyword>
<proteinExistence type="inferred from homology"/>
<reference key="1">
    <citation type="submission" date="2007-08" db="EMBL/GenBank/DDBJ databases">
        <authorList>
            <consortium name="The Citrobacter koseri Genome Sequencing Project"/>
            <person name="McClelland M."/>
            <person name="Sanderson E.K."/>
            <person name="Porwollik S."/>
            <person name="Spieth J."/>
            <person name="Clifton W.S."/>
            <person name="Latreille P."/>
            <person name="Courtney L."/>
            <person name="Wang C."/>
            <person name="Pepin K."/>
            <person name="Bhonagiri V."/>
            <person name="Nash W."/>
            <person name="Johnson M."/>
            <person name="Thiruvilangam P."/>
            <person name="Wilson R."/>
        </authorList>
    </citation>
    <scope>NUCLEOTIDE SEQUENCE [LARGE SCALE GENOMIC DNA]</scope>
    <source>
        <strain>ATCC BAA-895 / CDC 4225-83 / SGSC4696</strain>
    </source>
</reference>
<organism>
    <name type="scientific">Citrobacter koseri (strain ATCC BAA-895 / CDC 4225-83 / SGSC4696)</name>
    <dbReference type="NCBI Taxonomy" id="290338"/>
    <lineage>
        <taxon>Bacteria</taxon>
        <taxon>Pseudomonadati</taxon>
        <taxon>Pseudomonadota</taxon>
        <taxon>Gammaproteobacteria</taxon>
        <taxon>Enterobacterales</taxon>
        <taxon>Enterobacteriaceae</taxon>
        <taxon>Citrobacter</taxon>
    </lineage>
</organism>